<comment type="tissue specificity">
    <text evidence="3">Expressed in stems, leaves and flowers.</text>
</comment>
<comment type="similarity">
    <text evidence="4">Belongs to the MEG family.</text>
</comment>
<protein>
    <recommendedName>
        <fullName>EMBRYO SURROUNDING FACTOR 1-like protein 3</fullName>
    </recommendedName>
</protein>
<dbReference type="EMBL" id="AC000348">
    <property type="status" value="NOT_ANNOTATED_CDS"/>
    <property type="molecule type" value="Genomic_DNA"/>
</dbReference>
<dbReference type="EMBL" id="CP002684">
    <property type="protein sequence ID" value="AEE30785.1"/>
    <property type="molecule type" value="Genomic_DNA"/>
</dbReference>
<dbReference type="RefSeq" id="NP_001077601.1">
    <property type="nucleotide sequence ID" value="NM_001084132.1"/>
</dbReference>
<dbReference type="SMR" id="A8MRI0"/>
<dbReference type="STRING" id="3702.A8MRI0"/>
<dbReference type="PaxDb" id="3702-AT1G27135.1"/>
<dbReference type="EnsemblPlants" id="AT1G27135.1">
    <property type="protein sequence ID" value="AT1G27135.1"/>
    <property type="gene ID" value="AT1G27135"/>
</dbReference>
<dbReference type="GeneID" id="5007730"/>
<dbReference type="Gramene" id="AT1G27135.1">
    <property type="protein sequence ID" value="AT1G27135.1"/>
    <property type="gene ID" value="AT1G27135"/>
</dbReference>
<dbReference type="KEGG" id="ath:AT1G27135"/>
<dbReference type="Araport" id="AT1G27135"/>
<dbReference type="TAIR" id="AT1G27135"/>
<dbReference type="HOGENOM" id="CLU_183999_1_0_1"/>
<dbReference type="InParanoid" id="A8MRI0"/>
<dbReference type="OMA" id="CWCCFEP"/>
<dbReference type="PhylomeDB" id="A8MRI0"/>
<dbReference type="PRO" id="PR:A8MRI0"/>
<dbReference type="Proteomes" id="UP000006548">
    <property type="component" value="Chromosome 1"/>
</dbReference>
<dbReference type="GO" id="GO:0010098">
    <property type="term" value="P:suspensor development"/>
    <property type="evidence" value="ECO:0007669"/>
    <property type="project" value="InterPro"/>
</dbReference>
<dbReference type="InterPro" id="IPR041608">
    <property type="entry name" value="ESF1_brassicaceae"/>
</dbReference>
<dbReference type="Pfam" id="PF18209">
    <property type="entry name" value="ESF1"/>
    <property type="match status" value="1"/>
</dbReference>
<gene>
    <name type="primary">ESFL3</name>
    <name type="ordered locus">At1g27135</name>
    <name type="ORF">T7N9</name>
</gene>
<keyword id="KW-1015">Disulfide bond</keyword>
<keyword id="KW-1185">Reference proteome</keyword>
<keyword id="KW-0732">Signal</keyword>
<feature type="signal peptide" evidence="2">
    <location>
        <begin position="1"/>
        <end position="22"/>
    </location>
</feature>
<feature type="chain" id="PRO_0000430064" description="EMBRYO SURROUNDING FACTOR 1-like protein 3">
    <location>
        <begin position="23"/>
        <end position="88"/>
    </location>
</feature>
<feature type="disulfide bond" evidence="1">
    <location>
        <begin position="41"/>
        <end position="56"/>
    </location>
</feature>
<feature type="disulfide bond" evidence="1">
    <location>
        <begin position="54"/>
        <end position="80"/>
    </location>
</feature>
<feature type="disulfide bond" evidence="1">
    <location>
        <begin position="57"/>
        <end position="67"/>
    </location>
</feature>
<reference key="1">
    <citation type="journal article" date="2000" name="Nature">
        <title>Sequence and analysis of chromosome 1 of the plant Arabidopsis thaliana.</title>
        <authorList>
            <person name="Theologis A."/>
            <person name="Ecker J.R."/>
            <person name="Palm C.J."/>
            <person name="Federspiel N.A."/>
            <person name="Kaul S."/>
            <person name="White O."/>
            <person name="Alonso J."/>
            <person name="Altafi H."/>
            <person name="Araujo R."/>
            <person name="Bowman C.L."/>
            <person name="Brooks S.Y."/>
            <person name="Buehler E."/>
            <person name="Chan A."/>
            <person name="Chao Q."/>
            <person name="Chen H."/>
            <person name="Cheuk R.F."/>
            <person name="Chin C.W."/>
            <person name="Chung M.K."/>
            <person name="Conn L."/>
            <person name="Conway A.B."/>
            <person name="Conway A.R."/>
            <person name="Creasy T.H."/>
            <person name="Dewar K."/>
            <person name="Dunn P."/>
            <person name="Etgu P."/>
            <person name="Feldblyum T.V."/>
            <person name="Feng J.-D."/>
            <person name="Fong B."/>
            <person name="Fujii C.Y."/>
            <person name="Gill J.E."/>
            <person name="Goldsmith A.D."/>
            <person name="Haas B."/>
            <person name="Hansen N.F."/>
            <person name="Hughes B."/>
            <person name="Huizar L."/>
            <person name="Hunter J.L."/>
            <person name="Jenkins J."/>
            <person name="Johnson-Hopson C."/>
            <person name="Khan S."/>
            <person name="Khaykin E."/>
            <person name="Kim C.J."/>
            <person name="Koo H.L."/>
            <person name="Kremenetskaia I."/>
            <person name="Kurtz D.B."/>
            <person name="Kwan A."/>
            <person name="Lam B."/>
            <person name="Langin-Hooper S."/>
            <person name="Lee A."/>
            <person name="Lee J.M."/>
            <person name="Lenz C.A."/>
            <person name="Li J.H."/>
            <person name="Li Y.-P."/>
            <person name="Lin X."/>
            <person name="Liu S.X."/>
            <person name="Liu Z.A."/>
            <person name="Luros J.S."/>
            <person name="Maiti R."/>
            <person name="Marziali A."/>
            <person name="Militscher J."/>
            <person name="Miranda M."/>
            <person name="Nguyen M."/>
            <person name="Nierman W.C."/>
            <person name="Osborne B.I."/>
            <person name="Pai G."/>
            <person name="Peterson J."/>
            <person name="Pham P.K."/>
            <person name="Rizzo M."/>
            <person name="Rooney T."/>
            <person name="Rowley D."/>
            <person name="Sakano H."/>
            <person name="Salzberg S.L."/>
            <person name="Schwartz J.R."/>
            <person name="Shinn P."/>
            <person name="Southwick A.M."/>
            <person name="Sun H."/>
            <person name="Tallon L.J."/>
            <person name="Tambunga G."/>
            <person name="Toriumi M.J."/>
            <person name="Town C.D."/>
            <person name="Utterback T."/>
            <person name="Van Aken S."/>
            <person name="Vaysberg M."/>
            <person name="Vysotskaia V.S."/>
            <person name="Walker M."/>
            <person name="Wu D."/>
            <person name="Yu G."/>
            <person name="Fraser C.M."/>
            <person name="Venter J.C."/>
            <person name="Davis R.W."/>
        </authorList>
    </citation>
    <scope>NUCLEOTIDE SEQUENCE [LARGE SCALE GENOMIC DNA]</scope>
    <source>
        <strain>cv. Columbia</strain>
    </source>
</reference>
<reference key="2">
    <citation type="journal article" date="2017" name="Plant J.">
        <title>Araport11: a complete reannotation of the Arabidopsis thaliana reference genome.</title>
        <authorList>
            <person name="Cheng C.Y."/>
            <person name="Krishnakumar V."/>
            <person name="Chan A.P."/>
            <person name="Thibaud-Nissen F."/>
            <person name="Schobel S."/>
            <person name="Town C.D."/>
        </authorList>
    </citation>
    <scope>GENOME REANNOTATION</scope>
    <source>
        <strain>cv. Columbia</strain>
    </source>
</reference>
<reference key="3">
    <citation type="journal article" date="2014" name="Science">
        <title>Central cell-derived peptides regulate early embryo patterning in flowering plants.</title>
        <authorList>
            <person name="Costa L.M."/>
            <person name="Marshall E."/>
            <person name="Tesfaye M."/>
            <person name="Silverstein K.A."/>
            <person name="Mori M."/>
            <person name="Umetsu Y."/>
            <person name="Otterbach S.L."/>
            <person name="Papareddy R."/>
            <person name="Dickinson H.G."/>
            <person name="Boutiller K."/>
            <person name="VandenBosch K.A."/>
            <person name="Ohki S."/>
            <person name="Gutierrez-Marcos J.F."/>
        </authorList>
    </citation>
    <scope>IDENTIFICATION</scope>
    <scope>TISSUE SPECIFICITY</scope>
</reference>
<sequence>MKLSQIALICIVIASLFAMHECERLEATEEEKSSKIYVPPCYETICSFSLKKDCWCCFEPLVHKNLCWGVHDFPNAKELCFNEYSKKI</sequence>
<name>ESFL3_ARATH</name>
<organism>
    <name type="scientific">Arabidopsis thaliana</name>
    <name type="common">Mouse-ear cress</name>
    <dbReference type="NCBI Taxonomy" id="3702"/>
    <lineage>
        <taxon>Eukaryota</taxon>
        <taxon>Viridiplantae</taxon>
        <taxon>Streptophyta</taxon>
        <taxon>Embryophyta</taxon>
        <taxon>Tracheophyta</taxon>
        <taxon>Spermatophyta</taxon>
        <taxon>Magnoliopsida</taxon>
        <taxon>eudicotyledons</taxon>
        <taxon>Gunneridae</taxon>
        <taxon>Pentapetalae</taxon>
        <taxon>rosids</taxon>
        <taxon>malvids</taxon>
        <taxon>Brassicales</taxon>
        <taxon>Brassicaceae</taxon>
        <taxon>Camelineae</taxon>
        <taxon>Arabidopsis</taxon>
    </lineage>
</organism>
<evidence type="ECO:0000250" key="1"/>
<evidence type="ECO:0000255" key="2"/>
<evidence type="ECO:0000269" key="3">
    <source>
    </source>
</evidence>
<evidence type="ECO:0000305" key="4"/>
<accession>A8MRI0</accession>
<proteinExistence type="evidence at transcript level"/>